<name>RF2_BUCBP</name>
<keyword id="KW-0963">Cytoplasm</keyword>
<keyword id="KW-0488">Methylation</keyword>
<keyword id="KW-0648">Protein biosynthesis</keyword>
<keyword id="KW-1185">Reference proteome</keyword>
<keyword id="KW-0688">Ribosomal frameshifting</keyword>
<dbReference type="EMBL" id="AE016826">
    <property type="protein sequence ID" value="AAO27102.1"/>
    <property type="status" value="ALT_SEQ"/>
    <property type="molecule type" value="Genomic_DNA"/>
</dbReference>
<dbReference type="SMR" id="Q89AC4"/>
<dbReference type="STRING" id="224915.bbp_390"/>
<dbReference type="KEGG" id="bab:bbp_390"/>
<dbReference type="eggNOG" id="COG1186">
    <property type="taxonomic scope" value="Bacteria"/>
</dbReference>
<dbReference type="HOGENOM" id="CLU_036856_6_0_6"/>
<dbReference type="Proteomes" id="UP000000601">
    <property type="component" value="Chromosome"/>
</dbReference>
<dbReference type="GO" id="GO:0005737">
    <property type="term" value="C:cytoplasm"/>
    <property type="evidence" value="ECO:0007669"/>
    <property type="project" value="UniProtKB-SubCell"/>
</dbReference>
<dbReference type="GO" id="GO:0016149">
    <property type="term" value="F:translation release factor activity, codon specific"/>
    <property type="evidence" value="ECO:0007669"/>
    <property type="project" value="UniProtKB-UniRule"/>
</dbReference>
<dbReference type="GO" id="GO:0075523">
    <property type="term" value="P:viral translational frameshifting"/>
    <property type="evidence" value="ECO:0007669"/>
    <property type="project" value="UniProtKB-KW"/>
</dbReference>
<dbReference type="FunFam" id="3.30.160.20:FF:000010">
    <property type="entry name" value="Peptide chain release factor 2"/>
    <property type="match status" value="1"/>
</dbReference>
<dbReference type="Gene3D" id="3.30.160.20">
    <property type="match status" value="1"/>
</dbReference>
<dbReference type="Gene3D" id="3.30.70.1660">
    <property type="match status" value="1"/>
</dbReference>
<dbReference type="Gene3D" id="1.20.58.410">
    <property type="entry name" value="Release factor"/>
    <property type="match status" value="1"/>
</dbReference>
<dbReference type="HAMAP" id="MF_00094">
    <property type="entry name" value="Rel_fac_2"/>
    <property type="match status" value="1"/>
</dbReference>
<dbReference type="InterPro" id="IPR005139">
    <property type="entry name" value="PCRF"/>
</dbReference>
<dbReference type="InterPro" id="IPR000352">
    <property type="entry name" value="Pep_chain_release_fac_I"/>
</dbReference>
<dbReference type="InterPro" id="IPR045853">
    <property type="entry name" value="Pep_chain_release_fac_I_sf"/>
</dbReference>
<dbReference type="InterPro" id="IPR004374">
    <property type="entry name" value="PrfB"/>
</dbReference>
<dbReference type="NCBIfam" id="TIGR00020">
    <property type="entry name" value="prfB"/>
    <property type="match status" value="1"/>
</dbReference>
<dbReference type="PANTHER" id="PTHR43116:SF3">
    <property type="entry name" value="CLASS I PEPTIDE CHAIN RELEASE FACTOR"/>
    <property type="match status" value="1"/>
</dbReference>
<dbReference type="PANTHER" id="PTHR43116">
    <property type="entry name" value="PEPTIDE CHAIN RELEASE FACTOR 2"/>
    <property type="match status" value="1"/>
</dbReference>
<dbReference type="Pfam" id="PF03462">
    <property type="entry name" value="PCRF"/>
    <property type="match status" value="1"/>
</dbReference>
<dbReference type="Pfam" id="PF00472">
    <property type="entry name" value="RF-1"/>
    <property type="match status" value="1"/>
</dbReference>
<dbReference type="SMART" id="SM00937">
    <property type="entry name" value="PCRF"/>
    <property type="match status" value="1"/>
</dbReference>
<dbReference type="SUPFAM" id="SSF75620">
    <property type="entry name" value="Release factor"/>
    <property type="match status" value="1"/>
</dbReference>
<dbReference type="PROSITE" id="PS00745">
    <property type="entry name" value="RF_PROK_I"/>
    <property type="match status" value="1"/>
</dbReference>
<feature type="chain" id="PRO_0000166807" description="Peptide chain release factor 2">
    <location>
        <begin position="1"/>
        <end position="366"/>
    </location>
</feature>
<feature type="modified residue" description="N5-methylglutamine" evidence="1">
    <location>
        <position position="253"/>
    </location>
</feature>
<sequence>MFKNNNIINDRITNLVSQINKLKRRLDYDIKKNRLLEINMELKLPETWKHPSLIKKINKEKNQLISVVTQITKIDNDVQELIDILNLENSNNINSILDNVLYEFKNIEKSIHELEKCSMFLGKYDYLSCYVDIQSGSGGVEAQDWASMLLRMYVRWAESKKFKIDIIEQTYGEVVGIKSATIEVLGKYAFGWFRTETGIHRLVRKSPFNAHHRRHTSFSSVYVYPILDDAINVDINTRDLKIDVYRASGAGGQHVNKTESAVRIRHLPTGIVVQCQNDRSQHKNKDQAMKQLKAKLYEQLINEKKCQQKILENNKLNIGWGHQIRSYTLDNSRIKDLRTGVESKNIQSVLDGGLDLFVECSLRNGL</sequence>
<gene>
    <name type="primary">prfB</name>
    <name type="ordered locus">bbp_390</name>
</gene>
<organism>
    <name type="scientific">Buchnera aphidicola subsp. Baizongia pistaciae (strain Bp)</name>
    <dbReference type="NCBI Taxonomy" id="224915"/>
    <lineage>
        <taxon>Bacteria</taxon>
        <taxon>Pseudomonadati</taxon>
        <taxon>Pseudomonadota</taxon>
        <taxon>Gammaproteobacteria</taxon>
        <taxon>Enterobacterales</taxon>
        <taxon>Erwiniaceae</taxon>
        <taxon>Buchnera</taxon>
    </lineage>
</organism>
<proteinExistence type="inferred from homology"/>
<reference key="1">
    <citation type="journal article" date="2003" name="Proc. Natl. Acad. Sci. U.S.A.">
        <title>Reductive genome evolution in Buchnera aphidicola.</title>
        <authorList>
            <person name="van Ham R.C.H.J."/>
            <person name="Kamerbeek J."/>
            <person name="Palacios C."/>
            <person name="Rausell C."/>
            <person name="Abascal F."/>
            <person name="Bastolla U."/>
            <person name="Fernandez J.M."/>
            <person name="Jimenez L."/>
            <person name="Postigo M."/>
            <person name="Silva F.J."/>
            <person name="Tamames J."/>
            <person name="Viguera E."/>
            <person name="Latorre A."/>
            <person name="Valencia A."/>
            <person name="Moran F."/>
            <person name="Moya A."/>
        </authorList>
    </citation>
    <scope>NUCLEOTIDE SEQUENCE [LARGE SCALE GENOMIC DNA]</scope>
    <source>
        <strain>Bp</strain>
    </source>
</reference>
<protein>
    <recommendedName>
        <fullName>Peptide chain release factor 2</fullName>
        <shortName>RF-2</shortName>
    </recommendedName>
</protein>
<accession>Q89AC4</accession>
<evidence type="ECO:0000250" key="1"/>
<evidence type="ECO:0000305" key="2"/>
<comment type="function">
    <text evidence="1">Peptide chain release factor 2 directs the termination of translation in response to the peptide chain termination codons UGA and UAA.</text>
</comment>
<comment type="subcellular location">
    <subcellularLocation>
        <location evidence="1">Cytoplasm</location>
    </subcellularLocation>
</comment>
<comment type="PTM">
    <text evidence="1">Methylated by PrmC. Methylation increases the termination efficiency of RF2 (By similarity).</text>
</comment>
<comment type="miscellaneous">
    <text evidence="1">The gene for this protein contains a UGA in-frame termination codon after Leu-26; a naturally occurring frameshift enables complete translation of RF-2. This provides a mechanism for the protein to regulate its own production (By similarity).</text>
</comment>
<comment type="similarity">
    <text evidence="2">Belongs to the prokaryotic/mitochondrial release factor family.</text>
</comment>